<gene>
    <name evidence="1" type="primary">deoC</name>
    <name type="ordered locus">Ava_0730</name>
</gene>
<evidence type="ECO:0000255" key="1">
    <source>
        <dbReference type="HAMAP-Rule" id="MF_00114"/>
    </source>
</evidence>
<protein>
    <recommendedName>
        <fullName evidence="1">Deoxyribose-phosphate aldolase</fullName>
        <shortName evidence="1">DERA</shortName>
        <ecNumber evidence="1">4.1.2.4</ecNumber>
    </recommendedName>
    <alternativeName>
        <fullName evidence="1">2-deoxy-D-ribose 5-phosphate aldolase</fullName>
    </alternativeName>
    <alternativeName>
        <fullName evidence="1">Phosphodeoxyriboaldolase</fullName>
        <shortName evidence="1">Deoxyriboaldolase</shortName>
    </alternativeName>
</protein>
<sequence>MAADYPNIDIAPFIDHALLTPTATPEQVDQWCEQADRYNFASVCLYPTYVKQAAEFLHGKKPKVCTVIGFPTGATTRSVKLYEALEAVENGATELDVVINLGCLKSGNTEAVHREIAEICEETGQVVKVILETNLLTDAEKKIAADIAMDAGATFLKTNTGWNGGATVADVRLLKEITRERVGIKASGGIRTLNQALDLILAGATRLGTSRGIDLIHQRDNPEKVE</sequence>
<comment type="function">
    <text evidence="1">Catalyzes a reversible aldol reaction between acetaldehyde and D-glyceraldehyde 3-phosphate to generate 2-deoxy-D-ribose 5-phosphate.</text>
</comment>
<comment type="catalytic activity">
    <reaction evidence="1">
        <text>2-deoxy-D-ribose 5-phosphate = D-glyceraldehyde 3-phosphate + acetaldehyde</text>
        <dbReference type="Rhea" id="RHEA:12821"/>
        <dbReference type="ChEBI" id="CHEBI:15343"/>
        <dbReference type="ChEBI" id="CHEBI:59776"/>
        <dbReference type="ChEBI" id="CHEBI:62877"/>
        <dbReference type="EC" id="4.1.2.4"/>
    </reaction>
</comment>
<comment type="pathway">
    <text evidence="1">Carbohydrate degradation; 2-deoxy-D-ribose 1-phosphate degradation; D-glyceraldehyde 3-phosphate and acetaldehyde from 2-deoxy-alpha-D-ribose 1-phosphate: step 2/2.</text>
</comment>
<comment type="subcellular location">
    <subcellularLocation>
        <location evidence="1">Cytoplasm</location>
    </subcellularLocation>
</comment>
<comment type="similarity">
    <text evidence="1">Belongs to the DeoC/FbaB aldolase family. DeoC type 1 subfamily.</text>
</comment>
<proteinExistence type="inferred from homology"/>
<keyword id="KW-0963">Cytoplasm</keyword>
<keyword id="KW-0456">Lyase</keyword>
<keyword id="KW-0704">Schiff base</keyword>
<dbReference type="EC" id="4.1.2.4" evidence="1"/>
<dbReference type="EMBL" id="CP000117">
    <property type="protein sequence ID" value="ABA20354.1"/>
    <property type="molecule type" value="Genomic_DNA"/>
</dbReference>
<dbReference type="SMR" id="Q3MF82"/>
<dbReference type="STRING" id="240292.Ava_0730"/>
<dbReference type="KEGG" id="ava:Ava_0730"/>
<dbReference type="eggNOG" id="COG0274">
    <property type="taxonomic scope" value="Bacteria"/>
</dbReference>
<dbReference type="HOGENOM" id="CLU_053595_0_1_3"/>
<dbReference type="UniPathway" id="UPA00002">
    <property type="reaction ID" value="UER00468"/>
</dbReference>
<dbReference type="Proteomes" id="UP000002533">
    <property type="component" value="Chromosome"/>
</dbReference>
<dbReference type="GO" id="GO:0005737">
    <property type="term" value="C:cytoplasm"/>
    <property type="evidence" value="ECO:0007669"/>
    <property type="project" value="UniProtKB-SubCell"/>
</dbReference>
<dbReference type="GO" id="GO:0004139">
    <property type="term" value="F:deoxyribose-phosphate aldolase activity"/>
    <property type="evidence" value="ECO:0007669"/>
    <property type="project" value="UniProtKB-UniRule"/>
</dbReference>
<dbReference type="GO" id="GO:0006018">
    <property type="term" value="P:2-deoxyribose 1-phosphate catabolic process"/>
    <property type="evidence" value="ECO:0007669"/>
    <property type="project" value="UniProtKB-UniRule"/>
</dbReference>
<dbReference type="GO" id="GO:0016052">
    <property type="term" value="P:carbohydrate catabolic process"/>
    <property type="evidence" value="ECO:0007669"/>
    <property type="project" value="TreeGrafter"/>
</dbReference>
<dbReference type="GO" id="GO:0009264">
    <property type="term" value="P:deoxyribonucleotide catabolic process"/>
    <property type="evidence" value="ECO:0007669"/>
    <property type="project" value="InterPro"/>
</dbReference>
<dbReference type="CDD" id="cd00959">
    <property type="entry name" value="DeoC"/>
    <property type="match status" value="1"/>
</dbReference>
<dbReference type="FunFam" id="3.20.20.70:FF:000044">
    <property type="entry name" value="Deoxyribose-phosphate aldolase"/>
    <property type="match status" value="1"/>
</dbReference>
<dbReference type="Gene3D" id="3.20.20.70">
    <property type="entry name" value="Aldolase class I"/>
    <property type="match status" value="1"/>
</dbReference>
<dbReference type="HAMAP" id="MF_00114">
    <property type="entry name" value="DeoC_type1"/>
    <property type="match status" value="1"/>
</dbReference>
<dbReference type="InterPro" id="IPR013785">
    <property type="entry name" value="Aldolase_TIM"/>
</dbReference>
<dbReference type="InterPro" id="IPR011343">
    <property type="entry name" value="DeoC"/>
</dbReference>
<dbReference type="InterPro" id="IPR002915">
    <property type="entry name" value="DeoC/FbaB/LacD_aldolase"/>
</dbReference>
<dbReference type="InterPro" id="IPR028581">
    <property type="entry name" value="DeoC_typeI"/>
</dbReference>
<dbReference type="NCBIfam" id="TIGR00126">
    <property type="entry name" value="deoC"/>
    <property type="match status" value="1"/>
</dbReference>
<dbReference type="PANTHER" id="PTHR10889">
    <property type="entry name" value="DEOXYRIBOSE-PHOSPHATE ALDOLASE"/>
    <property type="match status" value="1"/>
</dbReference>
<dbReference type="PANTHER" id="PTHR10889:SF1">
    <property type="entry name" value="DEOXYRIBOSE-PHOSPHATE ALDOLASE"/>
    <property type="match status" value="1"/>
</dbReference>
<dbReference type="Pfam" id="PF01791">
    <property type="entry name" value="DeoC"/>
    <property type="match status" value="1"/>
</dbReference>
<dbReference type="PIRSF" id="PIRSF001357">
    <property type="entry name" value="DeoC"/>
    <property type="match status" value="1"/>
</dbReference>
<dbReference type="SMART" id="SM01133">
    <property type="entry name" value="DeoC"/>
    <property type="match status" value="1"/>
</dbReference>
<dbReference type="SUPFAM" id="SSF51569">
    <property type="entry name" value="Aldolase"/>
    <property type="match status" value="1"/>
</dbReference>
<organism>
    <name type="scientific">Trichormus variabilis (strain ATCC 29413 / PCC 7937)</name>
    <name type="common">Anabaena variabilis</name>
    <dbReference type="NCBI Taxonomy" id="240292"/>
    <lineage>
        <taxon>Bacteria</taxon>
        <taxon>Bacillati</taxon>
        <taxon>Cyanobacteriota</taxon>
        <taxon>Cyanophyceae</taxon>
        <taxon>Nostocales</taxon>
        <taxon>Nostocaceae</taxon>
        <taxon>Trichormus</taxon>
    </lineage>
</organism>
<feature type="chain" id="PRO_0000231527" description="Deoxyribose-phosphate aldolase">
    <location>
        <begin position="1"/>
        <end position="226"/>
    </location>
</feature>
<feature type="active site" description="Proton donor/acceptor" evidence="1">
    <location>
        <position position="96"/>
    </location>
</feature>
<feature type="active site" description="Schiff-base intermediate with acetaldehyde" evidence="1">
    <location>
        <position position="157"/>
    </location>
</feature>
<feature type="active site" description="Proton donor/acceptor" evidence="1">
    <location>
        <position position="185"/>
    </location>
</feature>
<name>DEOC_TRIV2</name>
<accession>Q3MF82</accession>
<reference key="1">
    <citation type="journal article" date="2014" name="Stand. Genomic Sci.">
        <title>Complete genome sequence of Anabaena variabilis ATCC 29413.</title>
        <authorList>
            <person name="Thiel T."/>
            <person name="Pratte B.S."/>
            <person name="Zhong J."/>
            <person name="Goodwin L."/>
            <person name="Copeland A."/>
            <person name="Lucas S."/>
            <person name="Han C."/>
            <person name="Pitluck S."/>
            <person name="Land M.L."/>
            <person name="Kyrpides N.C."/>
            <person name="Woyke T."/>
        </authorList>
    </citation>
    <scope>NUCLEOTIDE SEQUENCE [LARGE SCALE GENOMIC DNA]</scope>
    <source>
        <strain>ATCC 29413 / PCC 7937</strain>
    </source>
</reference>